<comment type="function">
    <text evidence="1">Catalyzes the NAD(+)-dependent oxidation of L-threonine to 2-amino-3-ketobutyrate.</text>
</comment>
<comment type="catalytic activity">
    <reaction evidence="1">
        <text>L-threonine + NAD(+) = (2S)-2-amino-3-oxobutanoate + NADH + H(+)</text>
        <dbReference type="Rhea" id="RHEA:13161"/>
        <dbReference type="ChEBI" id="CHEBI:15378"/>
        <dbReference type="ChEBI" id="CHEBI:57540"/>
        <dbReference type="ChEBI" id="CHEBI:57926"/>
        <dbReference type="ChEBI" id="CHEBI:57945"/>
        <dbReference type="ChEBI" id="CHEBI:78948"/>
        <dbReference type="EC" id="1.1.1.103"/>
    </reaction>
</comment>
<comment type="cofactor">
    <cofactor evidence="1">
        <name>Zn(2+)</name>
        <dbReference type="ChEBI" id="CHEBI:29105"/>
    </cofactor>
    <text evidence="1">Binds 2 Zn(2+) ions per subunit.</text>
</comment>
<comment type="pathway">
    <text evidence="1">Amino-acid degradation; L-threonine degradation via oxydo-reductase pathway; glycine from L-threonine: step 1/2.</text>
</comment>
<comment type="subunit">
    <text evidence="1">Homotetramer.</text>
</comment>
<comment type="subcellular location">
    <subcellularLocation>
        <location evidence="1">Cytoplasm</location>
    </subcellularLocation>
</comment>
<comment type="similarity">
    <text evidence="1">Belongs to the zinc-containing alcohol dehydrogenase family.</text>
</comment>
<evidence type="ECO:0000255" key="1">
    <source>
        <dbReference type="HAMAP-Rule" id="MF_00627"/>
    </source>
</evidence>
<organism>
    <name type="scientific">Vibrio vulnificus (strain CMCP6)</name>
    <dbReference type="NCBI Taxonomy" id="216895"/>
    <lineage>
        <taxon>Bacteria</taxon>
        <taxon>Pseudomonadati</taxon>
        <taxon>Pseudomonadota</taxon>
        <taxon>Gammaproteobacteria</taxon>
        <taxon>Vibrionales</taxon>
        <taxon>Vibrionaceae</taxon>
        <taxon>Vibrio</taxon>
    </lineage>
</organism>
<gene>
    <name evidence="1" type="primary">tdh</name>
    <name type="ordered locus">VV2_1485</name>
</gene>
<keyword id="KW-0963">Cytoplasm</keyword>
<keyword id="KW-0479">Metal-binding</keyword>
<keyword id="KW-0520">NAD</keyword>
<keyword id="KW-0560">Oxidoreductase</keyword>
<keyword id="KW-0862">Zinc</keyword>
<protein>
    <recommendedName>
        <fullName evidence="1">L-threonine 3-dehydrogenase</fullName>
        <shortName evidence="1">TDH</shortName>
        <ecNumber evidence="1">1.1.1.103</ecNumber>
    </recommendedName>
</protein>
<sequence>MKIKALSKLKPEEGIWMTEVDKPVLGHNDLLIKIKKTAICGTDVHIYNWDEWSQKTIPVPMVVGHEYVGEVVGIGQEVRGFEIGDRVSGEGHITCGHCRNCRGGRTHLCRNTIGVGVNRTGCFSEYLVIPAFNAFKIPANISDDLASIFDPFGNAVHTALSFDLVGEDVLITGAGPIGIMAAAVAKHVGARHVVITDVNEYRLDLARKMGVTRAVNVAEQKLDDVMAELGMTEGFDVGLEMSGNPSAFNSMLKTMNHGGRIALLGIPPSDMGIDWNQVIFKGLVIKGIYGREMFETWYKMASLIQSGLDLTPIITHHFKVDDFQQGFDIMRSGMSGKVILDWE</sequence>
<proteinExistence type="inferred from homology"/>
<name>TDH_VIBVU</name>
<reference key="1">
    <citation type="submission" date="2002-12" db="EMBL/GenBank/DDBJ databases">
        <title>Complete genome sequence of Vibrio vulnificus CMCP6.</title>
        <authorList>
            <person name="Rhee J.H."/>
            <person name="Kim S.Y."/>
            <person name="Chung S.S."/>
            <person name="Kim J.J."/>
            <person name="Moon Y.H."/>
            <person name="Jeong H."/>
            <person name="Choy H.E."/>
        </authorList>
    </citation>
    <scope>NUCLEOTIDE SEQUENCE [LARGE SCALE GENOMIC DNA]</scope>
    <source>
        <strain>CMCP6</strain>
    </source>
</reference>
<dbReference type="EC" id="1.1.1.103" evidence="1"/>
<dbReference type="EMBL" id="AE016796">
    <property type="protein sequence ID" value="AAO08354.1"/>
    <property type="molecule type" value="Genomic_DNA"/>
</dbReference>
<dbReference type="RefSeq" id="WP_011082342.1">
    <property type="nucleotide sequence ID" value="NC_004460.2"/>
</dbReference>
<dbReference type="SMR" id="Q8D442"/>
<dbReference type="KEGG" id="vvu:VV2_1485"/>
<dbReference type="HOGENOM" id="CLU_026673_11_0_6"/>
<dbReference type="UniPathway" id="UPA00046">
    <property type="reaction ID" value="UER00505"/>
</dbReference>
<dbReference type="Proteomes" id="UP000002275">
    <property type="component" value="Chromosome 2"/>
</dbReference>
<dbReference type="GO" id="GO:0005737">
    <property type="term" value="C:cytoplasm"/>
    <property type="evidence" value="ECO:0007669"/>
    <property type="project" value="UniProtKB-SubCell"/>
</dbReference>
<dbReference type="GO" id="GO:0008743">
    <property type="term" value="F:L-threonine 3-dehydrogenase activity"/>
    <property type="evidence" value="ECO:0007669"/>
    <property type="project" value="UniProtKB-UniRule"/>
</dbReference>
<dbReference type="GO" id="GO:0008270">
    <property type="term" value="F:zinc ion binding"/>
    <property type="evidence" value="ECO:0007669"/>
    <property type="project" value="UniProtKB-UniRule"/>
</dbReference>
<dbReference type="GO" id="GO:0019518">
    <property type="term" value="P:L-threonine catabolic process to glycine"/>
    <property type="evidence" value="ECO:0007669"/>
    <property type="project" value="UniProtKB-UniPathway"/>
</dbReference>
<dbReference type="FunFam" id="3.40.50.720:FF:000059">
    <property type="entry name" value="L-threonine 3-dehydrogenase"/>
    <property type="match status" value="1"/>
</dbReference>
<dbReference type="Gene3D" id="3.90.180.10">
    <property type="entry name" value="Medium-chain alcohol dehydrogenases, catalytic domain"/>
    <property type="match status" value="1"/>
</dbReference>
<dbReference type="Gene3D" id="3.40.50.720">
    <property type="entry name" value="NAD(P)-binding Rossmann-like Domain"/>
    <property type="match status" value="1"/>
</dbReference>
<dbReference type="HAMAP" id="MF_00627">
    <property type="entry name" value="Thr_dehydrog"/>
    <property type="match status" value="1"/>
</dbReference>
<dbReference type="InterPro" id="IPR013149">
    <property type="entry name" value="ADH-like_C"/>
</dbReference>
<dbReference type="InterPro" id="IPR013154">
    <property type="entry name" value="ADH-like_N"/>
</dbReference>
<dbReference type="InterPro" id="IPR002328">
    <property type="entry name" value="ADH_Zn_CS"/>
</dbReference>
<dbReference type="InterPro" id="IPR011032">
    <property type="entry name" value="GroES-like_sf"/>
</dbReference>
<dbReference type="InterPro" id="IPR004627">
    <property type="entry name" value="L-Threonine_3-DHase"/>
</dbReference>
<dbReference type="InterPro" id="IPR036291">
    <property type="entry name" value="NAD(P)-bd_dom_sf"/>
</dbReference>
<dbReference type="InterPro" id="IPR020843">
    <property type="entry name" value="PKS_ER"/>
</dbReference>
<dbReference type="InterPro" id="IPR050129">
    <property type="entry name" value="Zn_alcohol_dh"/>
</dbReference>
<dbReference type="NCBIfam" id="NF003808">
    <property type="entry name" value="PRK05396.1"/>
    <property type="match status" value="1"/>
</dbReference>
<dbReference type="NCBIfam" id="TIGR00692">
    <property type="entry name" value="tdh"/>
    <property type="match status" value="1"/>
</dbReference>
<dbReference type="PANTHER" id="PTHR43401">
    <property type="entry name" value="L-THREONINE 3-DEHYDROGENASE"/>
    <property type="match status" value="1"/>
</dbReference>
<dbReference type="PANTHER" id="PTHR43401:SF2">
    <property type="entry name" value="L-THREONINE 3-DEHYDROGENASE"/>
    <property type="match status" value="1"/>
</dbReference>
<dbReference type="Pfam" id="PF08240">
    <property type="entry name" value="ADH_N"/>
    <property type="match status" value="1"/>
</dbReference>
<dbReference type="Pfam" id="PF00107">
    <property type="entry name" value="ADH_zinc_N"/>
    <property type="match status" value="1"/>
</dbReference>
<dbReference type="SMART" id="SM00829">
    <property type="entry name" value="PKS_ER"/>
    <property type="match status" value="1"/>
</dbReference>
<dbReference type="SUPFAM" id="SSF50129">
    <property type="entry name" value="GroES-like"/>
    <property type="match status" value="1"/>
</dbReference>
<dbReference type="SUPFAM" id="SSF51735">
    <property type="entry name" value="NAD(P)-binding Rossmann-fold domains"/>
    <property type="match status" value="1"/>
</dbReference>
<dbReference type="PROSITE" id="PS00059">
    <property type="entry name" value="ADH_ZINC"/>
    <property type="match status" value="1"/>
</dbReference>
<feature type="chain" id="PRO_0000160868" description="L-threonine 3-dehydrogenase">
    <location>
        <begin position="1"/>
        <end position="343"/>
    </location>
</feature>
<feature type="active site" description="Charge relay system" evidence="1">
    <location>
        <position position="42"/>
    </location>
</feature>
<feature type="active site" description="Charge relay system" evidence="1">
    <location>
        <position position="45"/>
    </location>
</feature>
<feature type="binding site" evidence="1">
    <location>
        <position position="40"/>
    </location>
    <ligand>
        <name>Zn(2+)</name>
        <dbReference type="ChEBI" id="CHEBI:29105"/>
        <label>1</label>
        <note>catalytic</note>
    </ligand>
</feature>
<feature type="binding site" evidence="1">
    <location>
        <position position="65"/>
    </location>
    <ligand>
        <name>Zn(2+)</name>
        <dbReference type="ChEBI" id="CHEBI:29105"/>
        <label>1</label>
        <note>catalytic</note>
    </ligand>
</feature>
<feature type="binding site" evidence="1">
    <location>
        <position position="66"/>
    </location>
    <ligand>
        <name>Zn(2+)</name>
        <dbReference type="ChEBI" id="CHEBI:29105"/>
        <label>1</label>
        <note>catalytic</note>
    </ligand>
</feature>
<feature type="binding site" evidence="1">
    <location>
        <position position="95"/>
    </location>
    <ligand>
        <name>Zn(2+)</name>
        <dbReference type="ChEBI" id="CHEBI:29105"/>
        <label>2</label>
    </ligand>
</feature>
<feature type="binding site" evidence="1">
    <location>
        <position position="98"/>
    </location>
    <ligand>
        <name>Zn(2+)</name>
        <dbReference type="ChEBI" id="CHEBI:29105"/>
        <label>2</label>
    </ligand>
</feature>
<feature type="binding site" evidence="1">
    <location>
        <position position="101"/>
    </location>
    <ligand>
        <name>Zn(2+)</name>
        <dbReference type="ChEBI" id="CHEBI:29105"/>
        <label>2</label>
    </ligand>
</feature>
<feature type="binding site" evidence="1">
    <location>
        <position position="109"/>
    </location>
    <ligand>
        <name>Zn(2+)</name>
        <dbReference type="ChEBI" id="CHEBI:29105"/>
        <label>2</label>
    </ligand>
</feature>
<feature type="binding site" evidence="1">
    <location>
        <position position="177"/>
    </location>
    <ligand>
        <name>NAD(+)</name>
        <dbReference type="ChEBI" id="CHEBI:57540"/>
    </ligand>
</feature>
<feature type="binding site" evidence="1">
    <location>
        <position position="197"/>
    </location>
    <ligand>
        <name>NAD(+)</name>
        <dbReference type="ChEBI" id="CHEBI:57540"/>
    </ligand>
</feature>
<feature type="binding site" evidence="1">
    <location>
        <position position="202"/>
    </location>
    <ligand>
        <name>NAD(+)</name>
        <dbReference type="ChEBI" id="CHEBI:57540"/>
    </ligand>
</feature>
<feature type="binding site" evidence="1">
    <location>
        <begin position="264"/>
        <end position="266"/>
    </location>
    <ligand>
        <name>NAD(+)</name>
        <dbReference type="ChEBI" id="CHEBI:57540"/>
    </ligand>
</feature>
<feature type="binding site" evidence="1">
    <location>
        <begin position="288"/>
        <end position="289"/>
    </location>
    <ligand>
        <name>NAD(+)</name>
        <dbReference type="ChEBI" id="CHEBI:57540"/>
    </ligand>
</feature>
<feature type="site" description="Important for catalytic activity for the proton relay mechanism but does not participate directly in the coordination of zinc atom" evidence="1">
    <location>
        <position position="150"/>
    </location>
</feature>
<accession>Q8D442</accession>